<feature type="initiator methionine" description="Removed" evidence="1 2">
    <location>
        <position position="1"/>
    </location>
</feature>
<feature type="chain" id="PRO_0000052260" description="Biotin biosynthesis cytochrome P450">
    <location>
        <begin position="2"/>
        <end position="395"/>
    </location>
</feature>
<feature type="binding site">
    <location>
        <position position="60"/>
    </location>
    <ligand>
        <name>substrate</name>
    </ligand>
</feature>
<feature type="binding site">
    <location>
        <begin position="89"/>
        <end position="93"/>
    </location>
    <ligand>
        <name>heme</name>
        <dbReference type="ChEBI" id="CHEBI:30413"/>
    </ligand>
</feature>
<feature type="binding site">
    <location>
        <begin position="169"/>
        <end position="173"/>
    </location>
    <ligand>
        <name>substrate</name>
    </ligand>
</feature>
<feature type="binding site">
    <location>
        <begin position="285"/>
        <end position="287"/>
    </location>
    <ligand>
        <name>heme</name>
        <dbReference type="ChEBI" id="CHEBI:30413"/>
    </ligand>
</feature>
<feature type="binding site">
    <location>
        <position position="307"/>
    </location>
    <ligand>
        <name>substrate</name>
    </ligand>
</feature>
<feature type="binding site">
    <location>
        <begin position="343"/>
        <end position="345"/>
    </location>
    <ligand>
        <name>heme</name>
        <dbReference type="ChEBI" id="CHEBI:30413"/>
    </ligand>
</feature>
<feature type="binding site" description="axial binding residue">
    <location>
        <position position="345"/>
    </location>
    <ligand>
        <name>heme</name>
        <dbReference type="ChEBI" id="CHEBI:30413"/>
    </ligand>
    <ligandPart>
        <name>Fe</name>
        <dbReference type="ChEBI" id="CHEBI:18248"/>
    </ligandPart>
</feature>
<feature type="disulfide bond" evidence="3">
    <location>
        <begin position="250"/>
        <end position="275"/>
    </location>
</feature>
<feature type="helix" evidence="7">
    <location>
        <begin position="11"/>
        <end position="14"/>
    </location>
</feature>
<feature type="helix" evidence="7">
    <location>
        <begin position="16"/>
        <end position="26"/>
    </location>
</feature>
<feature type="strand" evidence="7">
    <location>
        <begin position="28"/>
        <end position="34"/>
    </location>
</feature>
<feature type="strand" evidence="7">
    <location>
        <begin position="37"/>
        <end position="42"/>
    </location>
</feature>
<feature type="helix" evidence="7">
    <location>
        <begin position="45"/>
        <end position="53"/>
    </location>
</feature>
<feature type="helix" evidence="7">
    <location>
        <begin position="71"/>
        <end position="78"/>
    </location>
</feature>
<feature type="helix" evidence="7">
    <location>
        <begin position="81"/>
        <end position="83"/>
    </location>
</feature>
<feature type="helix" evidence="7">
    <location>
        <begin position="88"/>
        <end position="97"/>
    </location>
</feature>
<feature type="helix" evidence="7">
    <location>
        <begin position="98"/>
        <end position="100"/>
    </location>
</feature>
<feature type="helix" evidence="7">
    <location>
        <begin position="102"/>
        <end position="106"/>
    </location>
</feature>
<feature type="helix" evidence="7">
    <location>
        <begin position="109"/>
        <end position="121"/>
    </location>
</feature>
<feature type="turn" evidence="7">
    <location>
        <begin position="122"/>
        <end position="126"/>
    </location>
</feature>
<feature type="strand" evidence="7">
    <location>
        <begin position="127"/>
        <end position="130"/>
    </location>
</feature>
<feature type="helix" evidence="7">
    <location>
        <begin position="131"/>
        <end position="134"/>
    </location>
</feature>
<feature type="helix" evidence="7">
    <location>
        <begin position="136"/>
        <end position="148"/>
    </location>
</feature>
<feature type="helix" evidence="7">
    <location>
        <begin position="152"/>
        <end position="154"/>
    </location>
</feature>
<feature type="helix" evidence="7">
    <location>
        <begin position="155"/>
        <end position="166"/>
    </location>
</feature>
<feature type="helix" evidence="7">
    <location>
        <begin position="167"/>
        <end position="169"/>
    </location>
</feature>
<feature type="helix" evidence="7">
    <location>
        <begin position="175"/>
        <end position="201"/>
    </location>
</feature>
<feature type="helix" evidence="7">
    <location>
        <begin position="207"/>
        <end position="213"/>
    </location>
</feature>
<feature type="helix" evidence="7">
    <location>
        <begin position="222"/>
        <end position="252"/>
    </location>
</feature>
<feature type="helix" evidence="7">
    <location>
        <begin position="255"/>
        <end position="263"/>
    </location>
</feature>
<feature type="helix" evidence="7">
    <location>
        <begin position="265"/>
        <end position="267"/>
    </location>
</feature>
<feature type="helix" evidence="7">
    <location>
        <begin position="268"/>
        <end position="278"/>
    </location>
</feature>
<feature type="strand" evidence="7">
    <location>
        <begin position="284"/>
        <end position="291"/>
    </location>
</feature>
<feature type="strand" evidence="7">
    <location>
        <begin position="293"/>
        <end position="295"/>
    </location>
</feature>
<feature type="strand" evidence="7">
    <location>
        <begin position="298"/>
        <end position="300"/>
    </location>
</feature>
<feature type="strand" evidence="7">
    <location>
        <begin position="305"/>
        <end position="309"/>
    </location>
</feature>
<feature type="helix" evidence="7">
    <location>
        <begin position="310"/>
        <end position="313"/>
    </location>
</feature>
<feature type="turn" evidence="7">
    <location>
        <begin position="317"/>
        <end position="319"/>
    </location>
</feature>
<feature type="strand" evidence="7">
    <location>
        <begin position="320"/>
        <end position="322"/>
    </location>
</feature>
<feature type="helix" evidence="8">
    <location>
        <begin position="341"/>
        <end position="343"/>
    </location>
</feature>
<feature type="helix" evidence="7">
    <location>
        <begin position="348"/>
        <end position="365"/>
    </location>
</feature>
<feature type="strand" evidence="7">
    <location>
        <begin position="382"/>
        <end position="384"/>
    </location>
</feature>
<feature type="strand" evidence="7">
    <location>
        <begin position="391"/>
        <end position="393"/>
    </location>
</feature>
<accession>P53554</accession>
<protein>
    <recommendedName>
        <fullName>Biotin biosynthesis cytochrome P450</fullName>
        <ecNumber evidence="1">1.14.14.46</ecNumber>
    </recommendedName>
</protein>
<comment type="function">
    <text evidence="1 5">Catalyzes the C-C bond cleavage of fatty acid linked to acyl carrier protein (ACP) to generate pimelic acid for biotin biosynthesis. It has high affinity for long-chain fatty acids with the greatest affinity for myristic acid.</text>
</comment>
<comment type="catalytic activity">
    <reaction evidence="1">
        <text>a C2-C8-saturated long-chain fatty acyl-[ACP] + 2 reduced [flavodoxin] + 3 O2 = 6-carboxyhexanoyl-[ACP] + a fatty aldehyde + 2 oxidized [flavodoxin] + 3 H2O + 3 H(+)</text>
        <dbReference type="Rhea" id="RHEA:52852"/>
        <dbReference type="Rhea" id="RHEA-COMP:9955"/>
        <dbReference type="Rhea" id="RHEA-COMP:10622"/>
        <dbReference type="Rhea" id="RHEA-COMP:10623"/>
        <dbReference type="Rhea" id="RHEA-COMP:13382"/>
        <dbReference type="ChEBI" id="CHEBI:15377"/>
        <dbReference type="ChEBI" id="CHEBI:15378"/>
        <dbReference type="ChEBI" id="CHEBI:15379"/>
        <dbReference type="ChEBI" id="CHEBI:35746"/>
        <dbReference type="ChEBI" id="CHEBI:57618"/>
        <dbReference type="ChEBI" id="CHEBI:58210"/>
        <dbReference type="ChEBI" id="CHEBI:78846"/>
        <dbReference type="ChEBI" id="CHEBI:136878"/>
        <dbReference type="EC" id="1.14.14.46"/>
    </reaction>
</comment>
<comment type="cofactor">
    <cofactor evidence="4">
        <name>heme</name>
        <dbReference type="ChEBI" id="CHEBI:30413"/>
    </cofactor>
    <text evidence="4">Binds 1 heme group covalently per subunit.</text>
</comment>
<comment type="pathway">
    <text>Cofactor biosynthesis; biotin biosynthesis.</text>
</comment>
<comment type="mass spectrometry" mass="44732.0" method="Electrospray" evidence="2"/>
<comment type="mass spectrometry" mass="45348.0" method="Electrospray" evidence="1"/>
<comment type="similarity">
    <text evidence="6">Belongs to the cytochrome P450 family.</text>
</comment>
<organism>
    <name type="scientific">Bacillus subtilis (strain 168)</name>
    <dbReference type="NCBI Taxonomy" id="224308"/>
    <lineage>
        <taxon>Bacteria</taxon>
        <taxon>Bacillati</taxon>
        <taxon>Bacillota</taxon>
        <taxon>Bacilli</taxon>
        <taxon>Bacillales</taxon>
        <taxon>Bacillaceae</taxon>
        <taxon>Bacillus</taxon>
    </lineage>
</organism>
<proteinExistence type="evidence at protein level"/>
<dbReference type="EC" id="1.14.14.46" evidence="1"/>
<dbReference type="EMBL" id="U51868">
    <property type="protein sequence ID" value="AAB17462.1"/>
    <property type="molecule type" value="Genomic_DNA"/>
</dbReference>
<dbReference type="EMBL" id="AF008220">
    <property type="protein sequence ID" value="AAC00266.1"/>
    <property type="molecule type" value="Genomic_DNA"/>
</dbReference>
<dbReference type="EMBL" id="AL009126">
    <property type="protein sequence ID" value="CAB14997.1"/>
    <property type="molecule type" value="Genomic_DNA"/>
</dbReference>
<dbReference type="PIR" id="G69594">
    <property type="entry name" value="G69594"/>
</dbReference>
<dbReference type="RefSeq" id="NP_390897.1">
    <property type="nucleotide sequence ID" value="NC_000964.3"/>
</dbReference>
<dbReference type="RefSeq" id="WP_004398783.1">
    <property type="nucleotide sequence ID" value="NZ_OZ025638.1"/>
</dbReference>
<dbReference type="PDB" id="3EJB">
    <property type="method" value="X-ray"/>
    <property type="resolution" value="2.00 A"/>
    <property type="chains" value="B/D/F/H=2-395"/>
</dbReference>
<dbReference type="PDB" id="3EJD">
    <property type="method" value="X-ray"/>
    <property type="resolution" value="2.10 A"/>
    <property type="chains" value="B/D/F/H=2-395"/>
</dbReference>
<dbReference type="PDB" id="3EJE">
    <property type="method" value="X-ray"/>
    <property type="resolution" value="2.10 A"/>
    <property type="chains" value="B/D/F/H=2-395"/>
</dbReference>
<dbReference type="PDBsum" id="3EJB"/>
<dbReference type="PDBsum" id="3EJD"/>
<dbReference type="PDBsum" id="3EJE"/>
<dbReference type="SMR" id="P53554"/>
<dbReference type="DIP" id="DIP-46307N"/>
<dbReference type="FunCoup" id="P53554">
    <property type="interactions" value="246"/>
</dbReference>
<dbReference type="IntAct" id="P53554">
    <property type="interactions" value="1"/>
</dbReference>
<dbReference type="STRING" id="224308.BSU30190"/>
<dbReference type="DrugBank" id="DB04450">
    <property type="generic name" value="Heptyl 1-Thiohexopyranoside"/>
</dbReference>
<dbReference type="PaxDb" id="224308-BSU30190"/>
<dbReference type="EnsemblBacteria" id="CAB14997">
    <property type="protein sequence ID" value="CAB14997"/>
    <property type="gene ID" value="BSU_30190"/>
</dbReference>
<dbReference type="GeneID" id="935928"/>
<dbReference type="KEGG" id="bsu:BSU30190"/>
<dbReference type="PATRIC" id="fig|224308.179.peg.3275"/>
<dbReference type="eggNOG" id="COG2124">
    <property type="taxonomic scope" value="Bacteria"/>
</dbReference>
<dbReference type="InParanoid" id="P53554"/>
<dbReference type="OrthoDB" id="9801155at2"/>
<dbReference type="PhylomeDB" id="P53554"/>
<dbReference type="BioCyc" id="BSUB:BSU30190-MONOMER"/>
<dbReference type="BioCyc" id="MetaCyc:BSU30190-MONOMER"/>
<dbReference type="BRENDA" id="1.14.14.46">
    <property type="organism ID" value="658"/>
</dbReference>
<dbReference type="UniPathway" id="UPA00078"/>
<dbReference type="EvolutionaryTrace" id="P53554"/>
<dbReference type="Proteomes" id="UP000001570">
    <property type="component" value="Chromosome"/>
</dbReference>
<dbReference type="GO" id="GO:0020037">
    <property type="term" value="F:heme binding"/>
    <property type="evidence" value="ECO:0000318"/>
    <property type="project" value="GO_Central"/>
</dbReference>
<dbReference type="GO" id="GO:0005506">
    <property type="term" value="F:iron ion binding"/>
    <property type="evidence" value="ECO:0007669"/>
    <property type="project" value="InterPro"/>
</dbReference>
<dbReference type="GO" id="GO:0004497">
    <property type="term" value="F:monooxygenase activity"/>
    <property type="evidence" value="ECO:0000318"/>
    <property type="project" value="GO_Central"/>
</dbReference>
<dbReference type="GO" id="GO:0016705">
    <property type="term" value="F:oxidoreductase activity, acting on paired donors, with incorporation or reduction of molecular oxygen"/>
    <property type="evidence" value="ECO:0007669"/>
    <property type="project" value="InterPro"/>
</dbReference>
<dbReference type="GO" id="GO:0009102">
    <property type="term" value="P:biotin biosynthetic process"/>
    <property type="evidence" value="ECO:0000314"/>
    <property type="project" value="UniProtKB"/>
</dbReference>
<dbReference type="CDD" id="cd20625">
    <property type="entry name" value="CYP164-like"/>
    <property type="match status" value="1"/>
</dbReference>
<dbReference type="FunFam" id="1.10.630.10:FF:000018">
    <property type="entry name" value="Cytochrome P450 monooxygenase"/>
    <property type="match status" value="1"/>
</dbReference>
<dbReference type="Gene3D" id="1.10.630.10">
    <property type="entry name" value="Cytochrome P450"/>
    <property type="match status" value="1"/>
</dbReference>
<dbReference type="InterPro" id="IPR001128">
    <property type="entry name" value="Cyt_P450"/>
</dbReference>
<dbReference type="InterPro" id="IPR002397">
    <property type="entry name" value="Cyt_P450_B"/>
</dbReference>
<dbReference type="InterPro" id="IPR017972">
    <property type="entry name" value="Cyt_P450_CS"/>
</dbReference>
<dbReference type="InterPro" id="IPR036396">
    <property type="entry name" value="Cyt_P450_sf"/>
</dbReference>
<dbReference type="PANTHER" id="PTHR46696:SF4">
    <property type="entry name" value="BIOTIN BIOSYNTHESIS CYTOCHROME P450"/>
    <property type="match status" value="1"/>
</dbReference>
<dbReference type="PANTHER" id="PTHR46696">
    <property type="entry name" value="P450, PUTATIVE (EUROFUNG)-RELATED"/>
    <property type="match status" value="1"/>
</dbReference>
<dbReference type="Pfam" id="PF00067">
    <property type="entry name" value="p450"/>
    <property type="match status" value="1"/>
</dbReference>
<dbReference type="PRINTS" id="PR00359">
    <property type="entry name" value="BP450"/>
</dbReference>
<dbReference type="PRINTS" id="PR00385">
    <property type="entry name" value="P450"/>
</dbReference>
<dbReference type="SUPFAM" id="SSF48264">
    <property type="entry name" value="Cytochrome P450"/>
    <property type="match status" value="1"/>
</dbReference>
<dbReference type="PROSITE" id="PS00086">
    <property type="entry name" value="CYTOCHROME_P450"/>
    <property type="match status" value="1"/>
</dbReference>
<gene>
    <name type="primary">bioI</name>
    <name type="synonym">CYP107H</name>
    <name type="ordered locus">BSU30190</name>
</gene>
<evidence type="ECO:0000269" key="1">
    <source>
    </source>
</evidence>
<evidence type="ECO:0000269" key="2">
    <source>
    </source>
</evidence>
<evidence type="ECO:0000269" key="3">
    <source>
    </source>
</evidence>
<evidence type="ECO:0000269" key="4">
    <source>
    </source>
</evidence>
<evidence type="ECO:0000269" key="5">
    <source>
    </source>
</evidence>
<evidence type="ECO:0000305" key="6"/>
<evidence type="ECO:0007829" key="7">
    <source>
        <dbReference type="PDB" id="3EJB"/>
    </source>
</evidence>
<evidence type="ECO:0007829" key="8">
    <source>
        <dbReference type="PDB" id="3EJE"/>
    </source>
</evidence>
<keyword id="KW-0002">3D-structure</keyword>
<keyword id="KW-0093">Biotin biosynthesis</keyword>
<keyword id="KW-0903">Direct protein sequencing</keyword>
<keyword id="KW-1015">Disulfide bond</keyword>
<keyword id="KW-0349">Heme</keyword>
<keyword id="KW-0408">Iron</keyword>
<keyword id="KW-0479">Metal-binding</keyword>
<keyword id="KW-0503">Monooxygenase</keyword>
<keyword id="KW-0560">Oxidoreductase</keyword>
<keyword id="KW-1185">Reference proteome</keyword>
<reference key="1">
    <citation type="journal article" date="1996" name="J. Bacteriol.">
        <title>Cloning, sequencing, and characterization of the Bacillus subtilis biotin biosynthetic operon.</title>
        <authorList>
            <person name="Bower S."/>
            <person name="Perkins J.B."/>
            <person name="Yocum R.R."/>
            <person name="Howitt C.L."/>
            <person name="Rahaim P."/>
            <person name="Pero J."/>
        </authorList>
    </citation>
    <scope>NUCLEOTIDE SEQUENCE [GENOMIC DNA]</scope>
    <scope>FUNCTION</scope>
</reference>
<reference key="2">
    <citation type="journal article" date="1997" name="Microbiology">
        <title>Sequencing and functional annotation of the Bacillus subtilis genes in the 200 kb rrnB-dnaB region.</title>
        <authorList>
            <person name="Lapidus A."/>
            <person name="Galleron N."/>
            <person name="Sorokin A."/>
            <person name="Ehrlich S.D."/>
        </authorList>
    </citation>
    <scope>NUCLEOTIDE SEQUENCE [GENOMIC DNA]</scope>
    <source>
        <strain>168</strain>
    </source>
</reference>
<reference key="3">
    <citation type="journal article" date="1997" name="Nature">
        <title>The complete genome sequence of the Gram-positive bacterium Bacillus subtilis.</title>
        <authorList>
            <person name="Kunst F."/>
            <person name="Ogasawara N."/>
            <person name="Moszer I."/>
            <person name="Albertini A.M."/>
            <person name="Alloni G."/>
            <person name="Azevedo V."/>
            <person name="Bertero M.G."/>
            <person name="Bessieres P."/>
            <person name="Bolotin A."/>
            <person name="Borchert S."/>
            <person name="Borriss R."/>
            <person name="Boursier L."/>
            <person name="Brans A."/>
            <person name="Braun M."/>
            <person name="Brignell S.C."/>
            <person name="Bron S."/>
            <person name="Brouillet S."/>
            <person name="Bruschi C.V."/>
            <person name="Caldwell B."/>
            <person name="Capuano V."/>
            <person name="Carter N.M."/>
            <person name="Choi S.-K."/>
            <person name="Codani J.-J."/>
            <person name="Connerton I.F."/>
            <person name="Cummings N.J."/>
            <person name="Daniel R.A."/>
            <person name="Denizot F."/>
            <person name="Devine K.M."/>
            <person name="Duesterhoeft A."/>
            <person name="Ehrlich S.D."/>
            <person name="Emmerson P.T."/>
            <person name="Entian K.-D."/>
            <person name="Errington J."/>
            <person name="Fabret C."/>
            <person name="Ferrari E."/>
            <person name="Foulger D."/>
            <person name="Fritz C."/>
            <person name="Fujita M."/>
            <person name="Fujita Y."/>
            <person name="Fuma S."/>
            <person name="Galizzi A."/>
            <person name="Galleron N."/>
            <person name="Ghim S.-Y."/>
            <person name="Glaser P."/>
            <person name="Goffeau A."/>
            <person name="Golightly E.J."/>
            <person name="Grandi G."/>
            <person name="Guiseppi G."/>
            <person name="Guy B.J."/>
            <person name="Haga K."/>
            <person name="Haiech J."/>
            <person name="Harwood C.R."/>
            <person name="Henaut A."/>
            <person name="Hilbert H."/>
            <person name="Holsappel S."/>
            <person name="Hosono S."/>
            <person name="Hullo M.-F."/>
            <person name="Itaya M."/>
            <person name="Jones L.-M."/>
            <person name="Joris B."/>
            <person name="Karamata D."/>
            <person name="Kasahara Y."/>
            <person name="Klaerr-Blanchard M."/>
            <person name="Klein C."/>
            <person name="Kobayashi Y."/>
            <person name="Koetter P."/>
            <person name="Koningstein G."/>
            <person name="Krogh S."/>
            <person name="Kumano M."/>
            <person name="Kurita K."/>
            <person name="Lapidus A."/>
            <person name="Lardinois S."/>
            <person name="Lauber J."/>
            <person name="Lazarevic V."/>
            <person name="Lee S.-M."/>
            <person name="Levine A."/>
            <person name="Liu H."/>
            <person name="Masuda S."/>
            <person name="Mauel C."/>
            <person name="Medigue C."/>
            <person name="Medina N."/>
            <person name="Mellado R.P."/>
            <person name="Mizuno M."/>
            <person name="Moestl D."/>
            <person name="Nakai S."/>
            <person name="Noback M."/>
            <person name="Noone D."/>
            <person name="O'Reilly M."/>
            <person name="Ogawa K."/>
            <person name="Ogiwara A."/>
            <person name="Oudega B."/>
            <person name="Park S.-H."/>
            <person name="Parro V."/>
            <person name="Pohl T.M."/>
            <person name="Portetelle D."/>
            <person name="Porwollik S."/>
            <person name="Prescott A.M."/>
            <person name="Presecan E."/>
            <person name="Pujic P."/>
            <person name="Purnelle B."/>
            <person name="Rapoport G."/>
            <person name="Rey M."/>
            <person name="Reynolds S."/>
            <person name="Rieger M."/>
            <person name="Rivolta C."/>
            <person name="Rocha E."/>
            <person name="Roche B."/>
            <person name="Rose M."/>
            <person name="Sadaie Y."/>
            <person name="Sato T."/>
            <person name="Scanlan E."/>
            <person name="Schleich S."/>
            <person name="Schroeter R."/>
            <person name="Scoffone F."/>
            <person name="Sekiguchi J."/>
            <person name="Sekowska A."/>
            <person name="Seror S.J."/>
            <person name="Serror P."/>
            <person name="Shin B.-S."/>
            <person name="Soldo B."/>
            <person name="Sorokin A."/>
            <person name="Tacconi E."/>
            <person name="Takagi T."/>
            <person name="Takahashi H."/>
            <person name="Takemaru K."/>
            <person name="Takeuchi M."/>
            <person name="Tamakoshi A."/>
            <person name="Tanaka T."/>
            <person name="Terpstra P."/>
            <person name="Tognoni A."/>
            <person name="Tosato V."/>
            <person name="Uchiyama S."/>
            <person name="Vandenbol M."/>
            <person name="Vannier F."/>
            <person name="Vassarotti A."/>
            <person name="Viari A."/>
            <person name="Wambutt R."/>
            <person name="Wedler E."/>
            <person name="Wedler H."/>
            <person name="Weitzenegger T."/>
            <person name="Winters P."/>
            <person name="Wipat A."/>
            <person name="Yamamoto H."/>
            <person name="Yamane K."/>
            <person name="Yasumoto K."/>
            <person name="Yata K."/>
            <person name="Yoshida K."/>
            <person name="Yoshikawa H.-F."/>
            <person name="Zumstein E."/>
            <person name="Yoshikawa H."/>
            <person name="Danchin A."/>
        </authorList>
    </citation>
    <scope>NUCLEOTIDE SEQUENCE [LARGE SCALE GENOMIC DNA]</scope>
    <source>
        <strain>168</strain>
    </source>
</reference>
<reference key="4">
    <citation type="journal article" date="2000" name="Arch. Biochem. Biophys.">
        <title>Expression, purification, and characterization of BioI: a carbon-carbon bond cleaving cytochrome P450 involved in biotin biosynthesis in Bacillus subtilis.</title>
        <authorList>
            <person name="Stok J.E."/>
            <person name="De Voss J."/>
        </authorList>
    </citation>
    <scope>PROTEIN SEQUENCE OF 2-9</scope>
    <scope>FUNCTION AS BIOTIN BIOSYNTHESIS CYTOCHROME P450</scope>
    <scope>CATALYTIC ACTIVITY</scope>
    <scope>MASS SPECTROMETRY</scope>
    <scope>SUBSTRATE SPECIFICITY</scope>
</reference>
<reference key="5">
    <citation type="journal article" date="2001" name="J. Biol. Inorg. Chem.">
        <title>Expression, purification and characterization of cytochrome P450 Biol: a novel P450 involved in biotin synthesis in Bacillus subtilis.</title>
        <authorList>
            <person name="Green A.J."/>
            <person name="Rivers S.L."/>
            <person name="Cheeseman M."/>
            <person name="Reid G.A."/>
            <person name="Quaroni L.G."/>
            <person name="Macdonald I.D.G."/>
            <person name="Chapman S.K."/>
            <person name="Munro A.W."/>
        </authorList>
    </citation>
    <scope>PROTEIN SEQUENCE OF 2-11</scope>
    <scope>MASS SPECTROMETRY</scope>
    <scope>SUBSTRATE SPECIFICITY</scope>
</reference>
<reference key="6">
    <citation type="journal article" date="2004" name="Biochemistry">
        <title>Thermodynamic and biophysical characterization of cytochrome P450 BioI from Bacillus subtilis.</title>
        <authorList>
            <person name="Lawson R.J."/>
            <person name="Leys D."/>
            <person name="Sutcliffe M.J."/>
            <person name="Kemp C.A."/>
            <person name="Cheesman M.R."/>
            <person name="Smith S.J."/>
            <person name="Clarkson J."/>
            <person name="Smith W.E."/>
            <person name="Haq I."/>
            <person name="Perkins J.B."/>
            <person name="Munro A.W."/>
        </authorList>
    </citation>
    <scope>SUBSTRATE SPECIFICITY</scope>
    <scope>DISULFIDE BOND</scope>
</reference>
<reference key="7">
    <citation type="journal article" date="2004" name="Chem. Commun. (Camb.)">
        <title>Carbon-carbon bond cleavage by cytochrome p450(BioI)(CYP107H1).</title>
        <authorList>
            <person name="Cryle M.J."/>
            <person name="De Voss J.J."/>
        </authorList>
    </citation>
    <scope>REACTION MECHANISM</scope>
</reference>
<reference key="8">
    <citation type="journal article" date="2008" name="Proc. Natl. Acad. Sci. U.S.A.">
        <title>Structural insights from a P450 Carrier Protein complex reveal how specificity is achieved in the P450(BioI) ACP complex.</title>
        <authorList>
            <person name="Cryle M.J."/>
            <person name="Schlichting I."/>
        </authorList>
    </citation>
    <scope>X-RAY CRYSTALLOGRAPHY (2.0 ANGSTROMS) OF 2-395 IN COMPLEX WITH SUBSTRATE ANALOGS AND HEME</scope>
    <scope>COFACTOR</scope>
</reference>
<sequence length="395" mass="44865">MTIASSTASSEFLKNPYSFYDTLRAVHPIYKGSFLKYPGWYVTGYEETAAILKDARFKVRTPLPESSTKYQDLSHVQNQMMLFQNQPDHRRLRTLASGAFTPRTTESYQPYIIETVHHLLDQVQGKKKMEVISDFAFPLASFVIANIIGVPEEDREQLKEWAASLIQTIDFTRSRKALTEGNIMAVQAMAYFKELIQKRKRHPQQDMISMLLKGREKDKLTEEEAASTCILLAIAGHETTVNLISNSVLCLLQHPEQLLKLRENPDLIGTAVEECLRYESPTQMTARVASEDIDICGVTIRQGEQVYLLLGAANRDPSIFTNPDVFDITRSPNPHLSFGHGHHVCLGSSLARLEAQIAINTLLQRMPSLNLADFEWRYRPLFGFRALEELPVTFE</sequence>
<name>BIOI_BACSU</name>